<organism>
    <name type="scientific">Picosynechococcus sp. (strain ATCC 27264 / PCC 7002 / PR-6)</name>
    <name type="common">Agmenellum quadruplicatum</name>
    <dbReference type="NCBI Taxonomy" id="32049"/>
    <lineage>
        <taxon>Bacteria</taxon>
        <taxon>Bacillati</taxon>
        <taxon>Cyanobacteriota</taxon>
        <taxon>Cyanophyceae</taxon>
        <taxon>Oscillatoriophycideae</taxon>
        <taxon>Chroococcales</taxon>
        <taxon>Geminocystaceae</taxon>
        <taxon>Picosynechococcus</taxon>
    </lineage>
</organism>
<comment type="catalytic activity">
    <reaction evidence="1">
        <text>tRNA(Gly) + glycine + ATP = glycyl-tRNA(Gly) + AMP + diphosphate</text>
        <dbReference type="Rhea" id="RHEA:16013"/>
        <dbReference type="Rhea" id="RHEA-COMP:9664"/>
        <dbReference type="Rhea" id="RHEA-COMP:9683"/>
        <dbReference type="ChEBI" id="CHEBI:30616"/>
        <dbReference type="ChEBI" id="CHEBI:33019"/>
        <dbReference type="ChEBI" id="CHEBI:57305"/>
        <dbReference type="ChEBI" id="CHEBI:78442"/>
        <dbReference type="ChEBI" id="CHEBI:78522"/>
        <dbReference type="ChEBI" id="CHEBI:456215"/>
        <dbReference type="EC" id="6.1.1.14"/>
    </reaction>
</comment>
<comment type="subunit">
    <text evidence="1">Tetramer of two alpha and two beta subunits.</text>
</comment>
<comment type="subcellular location">
    <subcellularLocation>
        <location evidence="1">Cytoplasm</location>
    </subcellularLocation>
</comment>
<comment type="similarity">
    <text evidence="1">Belongs to the class-II aminoacyl-tRNA synthetase family.</text>
</comment>
<name>SYGA_PICP2</name>
<proteinExistence type="inferred from homology"/>
<gene>
    <name evidence="1" type="primary">glyQ</name>
    <name type="ordered locus">SYNPCC7002_A0387</name>
</gene>
<evidence type="ECO:0000255" key="1">
    <source>
        <dbReference type="HAMAP-Rule" id="MF_00254"/>
    </source>
</evidence>
<reference key="1">
    <citation type="submission" date="2008-02" db="EMBL/GenBank/DDBJ databases">
        <title>Complete sequence of Synechococcus sp. PCC 7002.</title>
        <authorList>
            <person name="Li T."/>
            <person name="Zhao J."/>
            <person name="Zhao C."/>
            <person name="Liu Z."/>
            <person name="Zhao F."/>
            <person name="Marquardt J."/>
            <person name="Nomura C.T."/>
            <person name="Persson S."/>
            <person name="Detter J.C."/>
            <person name="Richardson P.M."/>
            <person name="Lanz C."/>
            <person name="Schuster S.C."/>
            <person name="Wang J."/>
            <person name="Li S."/>
            <person name="Huang X."/>
            <person name="Cai T."/>
            <person name="Yu Z."/>
            <person name="Luo J."/>
            <person name="Zhao J."/>
            <person name="Bryant D.A."/>
        </authorList>
    </citation>
    <scope>NUCLEOTIDE SEQUENCE [LARGE SCALE GENOMIC DNA]</scope>
    <source>
        <strain>ATCC 27264 / PCC 7002 / PR-6</strain>
    </source>
</reference>
<sequence length="293" mass="33921">MSLNFQEIIATLNQFWRDRGCLIAQPYDTEKGAGTMNHHTFLRAIGPEPWSVAYVEPCRRPTDGRYGENPNRVQHYFQYQVIIKPSPDNIQEIYLDSLKALGIQPEDHDIRFVEDNWESPTLGAWGVGWEVWLDGMEITQFTYFQQCGGLDCRPVCIEITYGLERLAMYLQEVDAITKIRWNETTSYGDIFLQSEIEQCTYNFEASNPEMLFQLFSLYEAEAQQLIEKGLVMPSLDYVLKCSHTFNLLDARGVIAVAERTRYIGRIRHMARQVAHLYLAQREELGFPLQKAIA</sequence>
<dbReference type="EC" id="6.1.1.14" evidence="1"/>
<dbReference type="EMBL" id="CP000951">
    <property type="protein sequence ID" value="ACA98397.1"/>
    <property type="molecule type" value="Genomic_DNA"/>
</dbReference>
<dbReference type="RefSeq" id="WP_012306021.1">
    <property type="nucleotide sequence ID" value="NZ_JAHHPU010000004.1"/>
</dbReference>
<dbReference type="SMR" id="B1XNV4"/>
<dbReference type="STRING" id="32049.SYNPCC7002_A0387"/>
<dbReference type="KEGG" id="syp:SYNPCC7002_A0387"/>
<dbReference type="eggNOG" id="COG0752">
    <property type="taxonomic scope" value="Bacteria"/>
</dbReference>
<dbReference type="HOGENOM" id="CLU_057066_1_0_3"/>
<dbReference type="Proteomes" id="UP000001688">
    <property type="component" value="Chromosome"/>
</dbReference>
<dbReference type="GO" id="GO:0005829">
    <property type="term" value="C:cytosol"/>
    <property type="evidence" value="ECO:0007669"/>
    <property type="project" value="TreeGrafter"/>
</dbReference>
<dbReference type="GO" id="GO:0005524">
    <property type="term" value="F:ATP binding"/>
    <property type="evidence" value="ECO:0007669"/>
    <property type="project" value="UniProtKB-UniRule"/>
</dbReference>
<dbReference type="GO" id="GO:0004820">
    <property type="term" value="F:glycine-tRNA ligase activity"/>
    <property type="evidence" value="ECO:0007669"/>
    <property type="project" value="UniProtKB-UniRule"/>
</dbReference>
<dbReference type="GO" id="GO:0006426">
    <property type="term" value="P:glycyl-tRNA aminoacylation"/>
    <property type="evidence" value="ECO:0007669"/>
    <property type="project" value="UniProtKB-UniRule"/>
</dbReference>
<dbReference type="CDD" id="cd00733">
    <property type="entry name" value="GlyRS_alpha_core"/>
    <property type="match status" value="1"/>
</dbReference>
<dbReference type="FunFam" id="3.30.930.10:FF:000006">
    <property type="entry name" value="Glycine--tRNA ligase alpha subunit"/>
    <property type="match status" value="1"/>
</dbReference>
<dbReference type="Gene3D" id="3.30.930.10">
    <property type="entry name" value="Bira Bifunctional Protein, Domain 2"/>
    <property type="match status" value="1"/>
</dbReference>
<dbReference type="Gene3D" id="1.20.58.180">
    <property type="entry name" value="Class II aaRS and biotin synthetases, domain 2"/>
    <property type="match status" value="1"/>
</dbReference>
<dbReference type="HAMAP" id="MF_00254">
    <property type="entry name" value="Gly_tRNA_synth_alpha"/>
    <property type="match status" value="1"/>
</dbReference>
<dbReference type="InterPro" id="IPR045864">
    <property type="entry name" value="aa-tRNA-synth_II/BPL/LPL"/>
</dbReference>
<dbReference type="InterPro" id="IPR006194">
    <property type="entry name" value="Gly-tRNA-synth_heterodimer"/>
</dbReference>
<dbReference type="InterPro" id="IPR002310">
    <property type="entry name" value="Gly-tRNA_ligase_asu"/>
</dbReference>
<dbReference type="NCBIfam" id="TIGR00388">
    <property type="entry name" value="glyQ"/>
    <property type="match status" value="1"/>
</dbReference>
<dbReference type="NCBIfam" id="NF006827">
    <property type="entry name" value="PRK09348.1"/>
    <property type="match status" value="1"/>
</dbReference>
<dbReference type="PANTHER" id="PTHR30075:SF2">
    <property type="entry name" value="GLYCINE--TRNA LIGASE, CHLOROPLASTIC_MITOCHONDRIAL 2"/>
    <property type="match status" value="1"/>
</dbReference>
<dbReference type="PANTHER" id="PTHR30075">
    <property type="entry name" value="GLYCYL-TRNA SYNTHETASE"/>
    <property type="match status" value="1"/>
</dbReference>
<dbReference type="Pfam" id="PF02091">
    <property type="entry name" value="tRNA-synt_2e"/>
    <property type="match status" value="1"/>
</dbReference>
<dbReference type="PRINTS" id="PR01044">
    <property type="entry name" value="TRNASYNTHGA"/>
</dbReference>
<dbReference type="SUPFAM" id="SSF55681">
    <property type="entry name" value="Class II aaRS and biotin synthetases"/>
    <property type="match status" value="1"/>
</dbReference>
<dbReference type="PROSITE" id="PS50861">
    <property type="entry name" value="AA_TRNA_LIGASE_II_GLYAB"/>
    <property type="match status" value="1"/>
</dbReference>
<accession>B1XNV4</accession>
<feature type="chain" id="PRO_1000101241" description="Glycine--tRNA ligase alpha subunit">
    <location>
        <begin position="1"/>
        <end position="293"/>
    </location>
</feature>
<keyword id="KW-0030">Aminoacyl-tRNA synthetase</keyword>
<keyword id="KW-0067">ATP-binding</keyword>
<keyword id="KW-0963">Cytoplasm</keyword>
<keyword id="KW-0436">Ligase</keyword>
<keyword id="KW-0547">Nucleotide-binding</keyword>
<keyword id="KW-0648">Protein biosynthesis</keyword>
<keyword id="KW-1185">Reference proteome</keyword>
<protein>
    <recommendedName>
        <fullName evidence="1">Glycine--tRNA ligase alpha subunit</fullName>
        <ecNumber evidence="1">6.1.1.14</ecNumber>
    </recommendedName>
    <alternativeName>
        <fullName evidence="1">Glycyl-tRNA synthetase alpha subunit</fullName>
        <shortName evidence="1">GlyRS</shortName>
    </alternativeName>
</protein>